<sequence>MSLSPCRAQRGFSARSACSARSRGRSRGGFSSRGGFSSRSLNSFGGCLEGSRGSTWGSGGRLGVRFGEWSGGPGLSLCPPGGIQEVTINQNLLTPLKIEIDPQFQVVRTQETQEIRTLNNQFASFIDKVRFLEQQNKVLETKWHLLQQQGLSGSQQGLEPVFEACLDQLRKQLEQLQGERGALDAELKACRDQEEEYKSKYEEEAHRRATLENDFVVLKKDVDGVFLSKMELEGKLEALREYLYFLKHLNEEELGQLQTQASDTSVVLSMDNNRYLDFSSIITEVRARYEEIARSSKAEAEALYQTKYQELQVSAQLHGDRMQETKVQISQLHQEIQRLQSQTENLKKQNASLQAAITDAEQRGELALKDAQAKVDELEAALRMAKQNLARLLCEYQELTSTKLSLDVEIATYRRLLEGEECRMSGECTSQVTISSVGGSAVMSGGVGGGLGSTCGLGSGKGSPGSCCTSIVTGGSNIILGSGKDPVLDSCSVSGSSAGSSCHTILKKTVESSLKTSITY</sequence>
<proteinExistence type="evidence at protein level"/>
<comment type="subunit">
    <text>Heterotetramer of two type I and two type II keratins.</text>
</comment>
<comment type="interaction">
    <interactant intactId="EBI-1056564">
        <id>Q8N1N4</id>
    </interactant>
    <interactant intactId="EBI-725606">
        <id>Q9NWQ9</id>
        <label>C14orf119</label>
    </interactant>
    <organismsDiffer>false</organismsDiffer>
    <experiments>3</experiments>
</comment>
<comment type="interaction">
    <interactant intactId="EBI-1056564">
        <id>Q8N1N4</id>
    </interactant>
    <interactant intactId="EBI-702178">
        <id>P02533</id>
        <label>KRT14</label>
    </interactant>
    <organismsDiffer>false</organismsDiffer>
    <experiments>3</experiments>
</comment>
<comment type="interaction">
    <interactant intactId="EBI-1056564">
        <id>Q8N1N4</id>
    </interactant>
    <interactant intactId="EBI-739566">
        <id>P19012</id>
        <label>KRT15</label>
    </interactant>
    <organismsDiffer>false</organismsDiffer>
    <experiments>3</experiments>
</comment>
<comment type="interaction">
    <interactant intactId="EBI-1056564">
        <id>Q8N1N4</id>
    </interactant>
    <interactant intactId="EBI-356410">
        <id>P08779</id>
        <label>KRT16</label>
    </interactant>
    <organismsDiffer>false</organismsDiffer>
    <experiments>3</experiments>
</comment>
<comment type="interaction">
    <interactant intactId="EBI-1056564">
        <id>Q8N1N4</id>
    </interactant>
    <interactant intactId="EBI-742756">
        <id>P08727</id>
        <label>KRT19</label>
    </interactant>
    <organismsDiffer>false</organismsDiffer>
    <experiments>3</experiments>
</comment>
<comment type="interaction">
    <interactant intactId="EBI-1056564">
        <id>Q8N1N4</id>
    </interactant>
    <interactant intactId="EBI-11980019">
        <id>Q7Z3Z0</id>
        <label>KRT25</label>
    </interactant>
    <organismsDiffer>false</organismsDiffer>
    <experiments>3</experiments>
</comment>
<comment type="interaction">
    <interactant intactId="EBI-1056564">
        <id>Q8N1N4</id>
    </interactant>
    <interactant intactId="EBI-3044087">
        <id>Q7Z3Y8</id>
        <label>KRT27</label>
    </interactant>
    <organismsDiffer>false</organismsDiffer>
    <experiments>3</experiments>
</comment>
<comment type="interaction">
    <interactant intactId="EBI-1056564">
        <id>Q8N1N4</id>
    </interactant>
    <interactant intactId="EBI-948001">
        <id>Q15323</id>
        <label>KRT31</label>
    </interactant>
    <organismsDiffer>false</organismsDiffer>
    <experiments>3</experiments>
</comment>
<comment type="interaction">
    <interactant intactId="EBI-1056564">
        <id>Q8N1N4</id>
    </interactant>
    <interactant intactId="EBI-1049638">
        <id>Q14525</id>
        <label>KRT33B</label>
    </interactant>
    <organismsDiffer>false</organismsDiffer>
    <experiments>5</experiments>
</comment>
<comment type="interaction">
    <interactant intactId="EBI-1056564">
        <id>Q8N1N4</id>
    </interactant>
    <interactant intactId="EBI-1047093">
        <id>O76011</id>
        <label>KRT34</label>
    </interactant>
    <organismsDiffer>false</organismsDiffer>
    <experiments>3</experiments>
</comment>
<comment type="interaction">
    <interactant intactId="EBI-1056564">
        <id>Q8N1N4</id>
    </interactant>
    <interactant intactId="EBI-1058674">
        <id>Q92764</id>
        <label>KRT35</label>
    </interactant>
    <organismsDiffer>false</organismsDiffer>
    <experiments>5</experiments>
</comment>
<comment type="interaction">
    <interactant intactId="EBI-1056564">
        <id>Q8N1N4</id>
    </interactant>
    <interactant intactId="EBI-11958506">
        <id>O76013-2</id>
        <label>KRT36</label>
    </interactant>
    <organismsDiffer>false</organismsDiffer>
    <experiments>3</experiments>
</comment>
<comment type="interaction">
    <interactant intactId="EBI-1056564">
        <id>Q8N1N4</id>
    </interactant>
    <interactant intactId="EBI-11958242">
        <id>Q6A163</id>
        <label>KRT39</label>
    </interactant>
    <organismsDiffer>false</organismsDiffer>
    <experiments>3</experiments>
</comment>
<comment type="interaction">
    <interactant intactId="EBI-1056564">
        <id>Q8N1N4</id>
    </interactant>
    <interactant intactId="EBI-2130429">
        <id>Q9BYV2</id>
        <label>TRIM54</label>
    </interactant>
    <organismsDiffer>false</organismsDiffer>
    <experiments>3</experiments>
</comment>
<comment type="alternative products">
    <event type="alternative splicing"/>
    <isoform>
        <id>Q8N1N4-1</id>
        <name>1</name>
        <sequence type="displayed"/>
    </isoform>
    <isoform>
        <id>Q8N1N4-2</id>
        <name>2</name>
        <sequence type="described" ref="VSP_030419 VSP_030420"/>
    </isoform>
</comment>
<comment type="tissue specificity">
    <text evidence="3 4">In non-keratinising esophageal and vaginal epithelium, strongly expressed in the basal and parabasal/lower suprabasal cell layers with considerably decreased expression in the mid/upper suprabasal layers (at protein level) (PubMed:26340985). A similar gradient from basal to lower suprabasal layers is seen in the partially keratinised dorsal tongue epithelium, in the scalp and in the plantar epidermis (at protein level) (PubMed:26340985). Extension of expression into the suprabasal compartments is distinctly more pronounced in non-keratinising epithelia than in keratinising epithelia and epidermis (at protein level) (PubMed:26340985). In scalp sections, present in the interfollicular epidermis and infundibulum including the entire outer root sheath of the hair follicles and also in the sebocytes (at protein level) (PubMed:26340985). In sweat glands, expressed in peripheral and luminal cells of the lower duct and in peripheral cells of the middle/upper duct with no expression observed in luminal cells (at protein level) (PubMed:26340985). In embryos at the 14th week of pregnancy, detected in basal and parabasal layers but is absent from the uppermost epidermal layer (at protein level) (PubMed:26340985). Expressed in tongue epithelium (PubMed:15737194).</text>
</comment>
<comment type="miscellaneous">
    <text>There are two types of cytoskeletal and microfibrillar keratin, I (acidic) and II (neutral to basic) (40-55 and 56-70 kDa, respectively).</text>
</comment>
<comment type="similarity">
    <text evidence="1">Belongs to the intermediate filament family.</text>
</comment>
<comment type="sequence caution" evidence="6">
    <conflict type="erroneous gene model prediction">
        <sequence resource="EMBL-CDS" id="DAA00377"/>
    </conflict>
</comment>
<keyword id="KW-0025">Alternative splicing</keyword>
<keyword id="KW-0175">Coiled coil</keyword>
<keyword id="KW-0403">Intermediate filament</keyword>
<keyword id="KW-0416">Keratin</keyword>
<keyword id="KW-1267">Proteomics identification</keyword>
<keyword id="KW-1185">Reference proteome</keyword>
<organism>
    <name type="scientific">Homo sapiens</name>
    <name type="common">Human</name>
    <dbReference type="NCBI Taxonomy" id="9606"/>
    <lineage>
        <taxon>Eukaryota</taxon>
        <taxon>Metazoa</taxon>
        <taxon>Chordata</taxon>
        <taxon>Craniata</taxon>
        <taxon>Vertebrata</taxon>
        <taxon>Euteleostomi</taxon>
        <taxon>Mammalia</taxon>
        <taxon>Eutheria</taxon>
        <taxon>Euarchontoglires</taxon>
        <taxon>Primates</taxon>
        <taxon>Haplorrhini</taxon>
        <taxon>Catarrhini</taxon>
        <taxon>Hominidae</taxon>
        <taxon>Homo</taxon>
    </lineage>
</organism>
<dbReference type="EMBL" id="AK096419">
    <property type="protein sequence ID" value="BAC04782.1"/>
    <property type="molecule type" value="mRNA"/>
</dbReference>
<dbReference type="EMBL" id="AK290901">
    <property type="protein sequence ID" value="BAF83590.1"/>
    <property type="molecule type" value="mRNA"/>
</dbReference>
<dbReference type="EMBL" id="BX647095">
    <property type="protein sequence ID" value="CAI46001.1"/>
    <property type="molecule type" value="mRNA"/>
</dbReference>
<dbReference type="EMBL" id="AC107016">
    <property type="status" value="NOT_ANNOTATED_CDS"/>
    <property type="molecule type" value="Genomic_DNA"/>
</dbReference>
<dbReference type="EMBL" id="BK000646">
    <property type="protein sequence ID" value="DAA00377.1"/>
    <property type="status" value="ALT_SEQ"/>
    <property type="molecule type" value="Genomic_DNA"/>
</dbReference>
<dbReference type="EMBL" id="CH471054">
    <property type="protein sequence ID" value="EAW96650.1"/>
    <property type="molecule type" value="Genomic_DNA"/>
</dbReference>
<dbReference type="CCDS" id="CCDS73473.1">
    <molecule id="Q8N1N4-2"/>
</dbReference>
<dbReference type="CCDS" id="CCDS8840.1">
    <molecule id="Q8N1N4-1"/>
</dbReference>
<dbReference type="RefSeq" id="NP_001287743.1">
    <molecule id="Q8N1N4-2"/>
    <property type="nucleotide sequence ID" value="NM_001300814.1"/>
</dbReference>
<dbReference type="RefSeq" id="NP_775487.2">
    <molecule id="Q8N1N4-1"/>
    <property type="nucleotide sequence ID" value="NM_173352.4"/>
</dbReference>
<dbReference type="SMR" id="Q8N1N4"/>
<dbReference type="BioGRID" id="128199">
    <property type="interactions" value="94"/>
</dbReference>
<dbReference type="FunCoup" id="Q8N1N4">
    <property type="interactions" value="151"/>
</dbReference>
<dbReference type="IntAct" id="Q8N1N4">
    <property type="interactions" value="47"/>
</dbReference>
<dbReference type="STRING" id="9606.ENSP00000306261"/>
<dbReference type="GlyGen" id="Q8N1N4">
    <property type="glycosylation" value="1 site, 1 O-linked glycan (1 site)"/>
</dbReference>
<dbReference type="iPTMnet" id="Q8N1N4"/>
<dbReference type="PhosphoSitePlus" id="Q8N1N4"/>
<dbReference type="SwissPalm" id="Q8N1N4"/>
<dbReference type="BioMuta" id="KRT78"/>
<dbReference type="DMDM" id="166218809"/>
<dbReference type="jPOST" id="Q8N1N4"/>
<dbReference type="MassIVE" id="Q8N1N4"/>
<dbReference type="PaxDb" id="9606-ENSP00000306261"/>
<dbReference type="PeptideAtlas" id="Q8N1N4"/>
<dbReference type="PRIDE" id="Q8N1N4"/>
<dbReference type="ProteomicsDB" id="71623">
    <molecule id="Q8N1N4-1"/>
</dbReference>
<dbReference type="ProteomicsDB" id="71624">
    <molecule id="Q8N1N4-2"/>
</dbReference>
<dbReference type="Antibodypedia" id="51417">
    <property type="antibodies" value="87 antibodies from 15 providers"/>
</dbReference>
<dbReference type="DNASU" id="196374"/>
<dbReference type="Ensembl" id="ENST00000304620.5">
    <molecule id="Q8N1N4-1"/>
    <property type="protein sequence ID" value="ENSP00000306261.4"/>
    <property type="gene ID" value="ENSG00000170423.13"/>
</dbReference>
<dbReference type="Ensembl" id="ENST00000359499.8">
    <molecule id="Q8N1N4-2"/>
    <property type="protein sequence ID" value="ENSP00000352479.4"/>
    <property type="gene ID" value="ENSG00000170423.13"/>
</dbReference>
<dbReference type="GeneID" id="196374"/>
<dbReference type="KEGG" id="hsa:196374"/>
<dbReference type="MANE-Select" id="ENST00000304620.5">
    <property type="protein sequence ID" value="ENSP00000306261.4"/>
    <property type="RefSeq nucleotide sequence ID" value="NM_173352.4"/>
    <property type="RefSeq protein sequence ID" value="NP_775487.2"/>
</dbReference>
<dbReference type="UCSC" id="uc001sbc.1">
    <molecule id="Q8N1N4-1"/>
    <property type="organism name" value="human"/>
</dbReference>
<dbReference type="AGR" id="HGNC:28926"/>
<dbReference type="CTD" id="196374"/>
<dbReference type="DisGeNET" id="196374"/>
<dbReference type="GeneCards" id="KRT78"/>
<dbReference type="HGNC" id="HGNC:28926">
    <property type="gene designation" value="KRT78"/>
</dbReference>
<dbReference type="HPA" id="ENSG00000170423">
    <property type="expression patterns" value="Tissue enriched (esophagus)"/>
</dbReference>
<dbReference type="MIM" id="611159">
    <property type="type" value="gene"/>
</dbReference>
<dbReference type="neXtProt" id="NX_Q8N1N4"/>
<dbReference type="OpenTargets" id="ENSG00000170423"/>
<dbReference type="PharmGKB" id="PA147357807"/>
<dbReference type="VEuPathDB" id="HostDB:ENSG00000170423"/>
<dbReference type="eggNOG" id="ENOG502SPJX">
    <property type="taxonomic scope" value="Eukaryota"/>
</dbReference>
<dbReference type="GeneTree" id="ENSGT00940000162461"/>
<dbReference type="HOGENOM" id="CLU_012560_5_2_1"/>
<dbReference type="InParanoid" id="Q8N1N4"/>
<dbReference type="OMA" id="ETQQIRT"/>
<dbReference type="OrthoDB" id="9450571at2759"/>
<dbReference type="PAN-GO" id="Q8N1N4">
    <property type="GO annotations" value="4 GO annotations based on evolutionary models"/>
</dbReference>
<dbReference type="PhylomeDB" id="Q8N1N4"/>
<dbReference type="TreeFam" id="TF317854"/>
<dbReference type="PathwayCommons" id="Q8N1N4"/>
<dbReference type="Reactome" id="R-HSA-6805567">
    <property type="pathway name" value="Keratinization"/>
</dbReference>
<dbReference type="Reactome" id="R-HSA-6809371">
    <property type="pathway name" value="Formation of the cornified envelope"/>
</dbReference>
<dbReference type="Reactome" id="R-HSA-9725554">
    <property type="pathway name" value="Differentiation of Keratinocytes in Interfollicular Epidermis in Mammalian Skin"/>
</dbReference>
<dbReference type="SignaLink" id="Q8N1N4"/>
<dbReference type="BioGRID-ORCS" id="196374">
    <property type="hits" value="19 hits in 1141 CRISPR screens"/>
</dbReference>
<dbReference type="GeneWiki" id="KRT78"/>
<dbReference type="GenomeRNAi" id="196374"/>
<dbReference type="Pharos" id="Q8N1N4">
    <property type="development level" value="Tbio"/>
</dbReference>
<dbReference type="PRO" id="PR:Q8N1N4"/>
<dbReference type="Proteomes" id="UP000005640">
    <property type="component" value="Chromosome 12"/>
</dbReference>
<dbReference type="RNAct" id="Q8N1N4">
    <property type="molecule type" value="protein"/>
</dbReference>
<dbReference type="Bgee" id="ENSG00000170423">
    <property type="expression patterns" value="Expressed in lower esophagus mucosa and 113 other cell types or tissues"/>
</dbReference>
<dbReference type="ExpressionAtlas" id="Q8N1N4">
    <property type="expression patterns" value="baseline and differential"/>
</dbReference>
<dbReference type="GO" id="GO:0005829">
    <property type="term" value="C:cytosol"/>
    <property type="evidence" value="ECO:0000304"/>
    <property type="project" value="Reactome"/>
</dbReference>
<dbReference type="GO" id="GO:0070062">
    <property type="term" value="C:extracellular exosome"/>
    <property type="evidence" value="ECO:0007005"/>
    <property type="project" value="UniProtKB"/>
</dbReference>
<dbReference type="GO" id="GO:0005615">
    <property type="term" value="C:extracellular space"/>
    <property type="evidence" value="ECO:0007005"/>
    <property type="project" value="UniProtKB"/>
</dbReference>
<dbReference type="GO" id="GO:0045095">
    <property type="term" value="C:keratin filament"/>
    <property type="evidence" value="ECO:0000318"/>
    <property type="project" value="GO_Central"/>
</dbReference>
<dbReference type="GO" id="GO:0030280">
    <property type="term" value="F:structural constituent of skin epidermis"/>
    <property type="evidence" value="ECO:0000318"/>
    <property type="project" value="GO_Central"/>
</dbReference>
<dbReference type="GO" id="GO:0045109">
    <property type="term" value="P:intermediate filament organization"/>
    <property type="evidence" value="ECO:0000318"/>
    <property type="project" value="GO_Central"/>
</dbReference>
<dbReference type="GO" id="GO:0031424">
    <property type="term" value="P:keratinization"/>
    <property type="evidence" value="ECO:0000318"/>
    <property type="project" value="GO_Central"/>
</dbReference>
<dbReference type="FunFam" id="1.20.5.1160:FF:000001">
    <property type="entry name" value="Keratin type II"/>
    <property type="match status" value="1"/>
</dbReference>
<dbReference type="FunFam" id="1.20.5.170:FF:000004">
    <property type="entry name" value="Keratin, type II cytoskeletal 5"/>
    <property type="match status" value="1"/>
</dbReference>
<dbReference type="FunFam" id="1.20.5.500:FF:000001">
    <property type="entry name" value="Type II keratin 23"/>
    <property type="match status" value="1"/>
</dbReference>
<dbReference type="Gene3D" id="1.20.5.170">
    <property type="match status" value="1"/>
</dbReference>
<dbReference type="Gene3D" id="1.20.5.500">
    <property type="entry name" value="Single helix bin"/>
    <property type="match status" value="1"/>
</dbReference>
<dbReference type="Gene3D" id="1.20.5.1160">
    <property type="entry name" value="Vasodilator-stimulated phosphoprotein"/>
    <property type="match status" value="1"/>
</dbReference>
<dbReference type="InterPro" id="IPR018039">
    <property type="entry name" value="IF_conserved"/>
</dbReference>
<dbReference type="InterPro" id="IPR039008">
    <property type="entry name" value="IF_rod_dom"/>
</dbReference>
<dbReference type="InterPro" id="IPR032444">
    <property type="entry name" value="Keratin_2_head"/>
</dbReference>
<dbReference type="InterPro" id="IPR003054">
    <property type="entry name" value="Keratin_II"/>
</dbReference>
<dbReference type="PANTHER" id="PTHR45616">
    <property type="entry name" value="GATA-TYPE DOMAIN-CONTAINING PROTEIN"/>
    <property type="match status" value="1"/>
</dbReference>
<dbReference type="PANTHER" id="PTHR45616:SF18">
    <property type="entry name" value="KERATIN, TYPE II CYTOSKELETAL 78"/>
    <property type="match status" value="1"/>
</dbReference>
<dbReference type="Pfam" id="PF00038">
    <property type="entry name" value="Filament"/>
    <property type="match status" value="1"/>
</dbReference>
<dbReference type="Pfam" id="PF16208">
    <property type="entry name" value="Keratin_2_head"/>
    <property type="match status" value="1"/>
</dbReference>
<dbReference type="PRINTS" id="PR01276">
    <property type="entry name" value="TYPE2KERATIN"/>
</dbReference>
<dbReference type="SMART" id="SM01391">
    <property type="entry name" value="Filament"/>
    <property type="match status" value="1"/>
</dbReference>
<dbReference type="SUPFAM" id="SSF64593">
    <property type="entry name" value="Intermediate filament protein, coiled coil region"/>
    <property type="match status" value="3"/>
</dbReference>
<dbReference type="PROSITE" id="PS00226">
    <property type="entry name" value="IF_ROD_1"/>
    <property type="match status" value="1"/>
</dbReference>
<dbReference type="PROSITE" id="PS51842">
    <property type="entry name" value="IF_ROD_2"/>
    <property type="match status" value="1"/>
</dbReference>
<gene>
    <name type="primary">KRT78</name>
    <name type="synonym">K5B</name>
    <name type="synonym">KB40</name>
</gene>
<name>K2C78_HUMAN</name>
<feature type="chain" id="PRO_0000314891" description="Keratin, type II cytoskeletal 78">
    <location>
        <begin position="1"/>
        <end position="520"/>
    </location>
</feature>
<feature type="domain" description="IF rod" evidence="1">
    <location>
        <begin position="111"/>
        <end position="424"/>
    </location>
</feature>
<feature type="region of interest" description="Head">
    <location>
        <begin position="1"/>
        <end position="110"/>
    </location>
</feature>
<feature type="region of interest" description="Coil 1A">
    <location>
        <begin position="111"/>
        <end position="146"/>
    </location>
</feature>
<feature type="region of interest" description="Linker 1">
    <location>
        <begin position="147"/>
        <end position="165"/>
    </location>
</feature>
<feature type="region of interest" description="Coil 1B">
    <location>
        <begin position="166"/>
        <end position="258"/>
    </location>
</feature>
<feature type="region of interest" description="Linker 12">
    <location>
        <begin position="259"/>
        <end position="281"/>
    </location>
</feature>
<feature type="region of interest" description="Coil 2">
    <location>
        <begin position="282"/>
        <end position="421"/>
    </location>
</feature>
<feature type="region of interest" description="Tail">
    <location>
        <begin position="422"/>
        <end position="520"/>
    </location>
</feature>
<feature type="site" description="Stutter">
    <location>
        <position position="362"/>
    </location>
</feature>
<feature type="splice variant" id="VSP_030419" description="In isoform 2." evidence="5">
    <location>
        <begin position="1"/>
        <end position="110"/>
    </location>
</feature>
<feature type="splice variant" id="VSP_030420" description="In isoform 2." evidence="5">
    <original>ETQEIRTLNNQFASFID</original>
    <variation>MEGHEASPAQVGQGDRG</variation>
    <location>
        <begin position="111"/>
        <end position="127"/>
    </location>
</feature>
<feature type="sequence variant" id="VAR_038109" description="In dbSNP:rs11170289.">
    <original>R</original>
    <variation>H</variation>
    <location>
        <position position="25"/>
    </location>
</feature>
<feature type="sequence variant" id="VAR_038110" description="In dbSNP:rs2013335." evidence="2">
    <original>L</original>
    <variation>P</variation>
    <location>
        <position position="92"/>
    </location>
</feature>
<feature type="sequence variant" id="VAR_038111" description="In dbSNP:rs2682343.">
    <original>G</original>
    <variation>A</variation>
    <location>
        <position position="224"/>
    </location>
</feature>
<feature type="sequence variant" id="VAR_038112" description="In dbSNP:rs10876360.">
    <original>A</original>
    <variation>T</variation>
    <location>
        <position position="238"/>
    </location>
</feature>
<feature type="sequence conflict" description="In Ref. 2; CAI46001." evidence="6" ref="2">
    <original>N</original>
    <variation>S</variation>
    <location>
        <position position="250"/>
    </location>
</feature>
<feature type="sequence conflict" description="In Ref. 1; BAC04782." evidence="6" ref="1">
    <original>T</original>
    <variation>A</variation>
    <location>
        <position position="259"/>
    </location>
</feature>
<evidence type="ECO:0000255" key="1">
    <source>
        <dbReference type="PROSITE-ProRule" id="PRU01188"/>
    </source>
</evidence>
<evidence type="ECO:0000269" key="2">
    <source>
    </source>
</evidence>
<evidence type="ECO:0000269" key="3">
    <source>
    </source>
</evidence>
<evidence type="ECO:0000269" key="4">
    <source>
    </source>
</evidence>
<evidence type="ECO:0000303" key="5">
    <source>
    </source>
</evidence>
<evidence type="ECO:0000305" key="6"/>
<reference key="1">
    <citation type="journal article" date="2004" name="Nat. Genet.">
        <title>Complete sequencing and characterization of 21,243 full-length human cDNAs.</title>
        <authorList>
            <person name="Ota T."/>
            <person name="Suzuki Y."/>
            <person name="Nishikawa T."/>
            <person name="Otsuki T."/>
            <person name="Sugiyama T."/>
            <person name="Irie R."/>
            <person name="Wakamatsu A."/>
            <person name="Hayashi K."/>
            <person name="Sato H."/>
            <person name="Nagai K."/>
            <person name="Kimura K."/>
            <person name="Makita H."/>
            <person name="Sekine M."/>
            <person name="Obayashi M."/>
            <person name="Nishi T."/>
            <person name="Shibahara T."/>
            <person name="Tanaka T."/>
            <person name="Ishii S."/>
            <person name="Yamamoto J."/>
            <person name="Saito K."/>
            <person name="Kawai Y."/>
            <person name="Isono Y."/>
            <person name="Nakamura Y."/>
            <person name="Nagahari K."/>
            <person name="Murakami K."/>
            <person name="Yasuda T."/>
            <person name="Iwayanagi T."/>
            <person name="Wagatsuma M."/>
            <person name="Shiratori A."/>
            <person name="Sudo H."/>
            <person name="Hosoiri T."/>
            <person name="Kaku Y."/>
            <person name="Kodaira H."/>
            <person name="Kondo H."/>
            <person name="Sugawara M."/>
            <person name="Takahashi M."/>
            <person name="Kanda K."/>
            <person name="Yokoi T."/>
            <person name="Furuya T."/>
            <person name="Kikkawa E."/>
            <person name="Omura Y."/>
            <person name="Abe K."/>
            <person name="Kamihara K."/>
            <person name="Katsuta N."/>
            <person name="Sato K."/>
            <person name="Tanikawa M."/>
            <person name="Yamazaki M."/>
            <person name="Ninomiya K."/>
            <person name="Ishibashi T."/>
            <person name="Yamashita H."/>
            <person name="Murakawa K."/>
            <person name="Fujimori K."/>
            <person name="Tanai H."/>
            <person name="Kimata M."/>
            <person name="Watanabe M."/>
            <person name="Hiraoka S."/>
            <person name="Chiba Y."/>
            <person name="Ishida S."/>
            <person name="Ono Y."/>
            <person name="Takiguchi S."/>
            <person name="Watanabe S."/>
            <person name="Yosida M."/>
            <person name="Hotuta T."/>
            <person name="Kusano J."/>
            <person name="Kanehori K."/>
            <person name="Takahashi-Fujii A."/>
            <person name="Hara H."/>
            <person name="Tanase T.-O."/>
            <person name="Nomura Y."/>
            <person name="Togiya S."/>
            <person name="Komai F."/>
            <person name="Hara R."/>
            <person name="Takeuchi K."/>
            <person name="Arita M."/>
            <person name="Imose N."/>
            <person name="Musashino K."/>
            <person name="Yuuki H."/>
            <person name="Oshima A."/>
            <person name="Sasaki N."/>
            <person name="Aotsuka S."/>
            <person name="Yoshikawa Y."/>
            <person name="Matsunawa H."/>
            <person name="Ichihara T."/>
            <person name="Shiohata N."/>
            <person name="Sano S."/>
            <person name="Moriya S."/>
            <person name="Momiyama H."/>
            <person name="Satoh N."/>
            <person name="Takami S."/>
            <person name="Terashima Y."/>
            <person name="Suzuki O."/>
            <person name="Nakagawa S."/>
            <person name="Senoh A."/>
            <person name="Mizoguchi H."/>
            <person name="Goto Y."/>
            <person name="Shimizu F."/>
            <person name="Wakebe H."/>
            <person name="Hishigaki H."/>
            <person name="Watanabe T."/>
            <person name="Sugiyama A."/>
            <person name="Takemoto M."/>
            <person name="Kawakami B."/>
            <person name="Yamazaki M."/>
            <person name="Watanabe K."/>
            <person name="Kumagai A."/>
            <person name="Itakura S."/>
            <person name="Fukuzumi Y."/>
            <person name="Fujimori Y."/>
            <person name="Komiyama M."/>
            <person name="Tashiro H."/>
            <person name="Tanigami A."/>
            <person name="Fujiwara T."/>
            <person name="Ono T."/>
            <person name="Yamada K."/>
            <person name="Fujii Y."/>
            <person name="Ozaki K."/>
            <person name="Hirao M."/>
            <person name="Ohmori Y."/>
            <person name="Kawabata A."/>
            <person name="Hikiji T."/>
            <person name="Kobatake N."/>
            <person name="Inagaki H."/>
            <person name="Ikema Y."/>
            <person name="Okamoto S."/>
            <person name="Okitani R."/>
            <person name="Kawakami T."/>
            <person name="Noguchi S."/>
            <person name="Itoh T."/>
            <person name="Shigeta K."/>
            <person name="Senba T."/>
            <person name="Matsumura K."/>
            <person name="Nakajima Y."/>
            <person name="Mizuno T."/>
            <person name="Morinaga M."/>
            <person name="Sasaki M."/>
            <person name="Togashi T."/>
            <person name="Oyama M."/>
            <person name="Hata H."/>
            <person name="Watanabe M."/>
            <person name="Komatsu T."/>
            <person name="Mizushima-Sugano J."/>
            <person name="Satoh T."/>
            <person name="Shirai Y."/>
            <person name="Takahashi Y."/>
            <person name="Nakagawa K."/>
            <person name="Okumura K."/>
            <person name="Nagase T."/>
            <person name="Nomura N."/>
            <person name="Kikuchi H."/>
            <person name="Masuho Y."/>
            <person name="Yamashita R."/>
            <person name="Nakai K."/>
            <person name="Yada T."/>
            <person name="Nakamura Y."/>
            <person name="Ohara O."/>
            <person name="Isogai T."/>
            <person name="Sugano S."/>
        </authorList>
    </citation>
    <scope>NUCLEOTIDE SEQUENCE [LARGE SCALE MRNA] (ISOFORM 1)</scope>
    <scope>VARIANT PRO-92</scope>
    <source>
        <tissue>Esophagus</tissue>
        <tissue>Tongue</tissue>
    </source>
</reference>
<reference key="2">
    <citation type="journal article" date="2007" name="BMC Genomics">
        <title>The full-ORF clone resource of the German cDNA consortium.</title>
        <authorList>
            <person name="Bechtel S."/>
            <person name="Rosenfelder H."/>
            <person name="Duda A."/>
            <person name="Schmidt C.P."/>
            <person name="Ernst U."/>
            <person name="Wellenreuther R."/>
            <person name="Mehrle A."/>
            <person name="Schuster C."/>
            <person name="Bahr A."/>
            <person name="Bloecker H."/>
            <person name="Heubner D."/>
            <person name="Hoerlein A."/>
            <person name="Michel G."/>
            <person name="Wedler H."/>
            <person name="Koehrer K."/>
            <person name="Ottenwaelder B."/>
            <person name="Poustka A."/>
            <person name="Wiemann S."/>
            <person name="Schupp I."/>
        </authorList>
    </citation>
    <scope>NUCLEOTIDE SEQUENCE [LARGE SCALE MRNA] (ISOFORM 2)</scope>
    <source>
        <tissue>Esophageal carcinoma</tissue>
    </source>
</reference>
<reference key="3">
    <citation type="journal article" date="2006" name="Nature">
        <title>The finished DNA sequence of human chromosome 12.</title>
        <authorList>
            <person name="Scherer S.E."/>
            <person name="Muzny D.M."/>
            <person name="Buhay C.J."/>
            <person name="Chen R."/>
            <person name="Cree A."/>
            <person name="Ding Y."/>
            <person name="Dugan-Rocha S."/>
            <person name="Gill R."/>
            <person name="Gunaratne P."/>
            <person name="Harris R.A."/>
            <person name="Hawes A.C."/>
            <person name="Hernandez J."/>
            <person name="Hodgson A.V."/>
            <person name="Hume J."/>
            <person name="Jackson A."/>
            <person name="Khan Z.M."/>
            <person name="Kovar-Smith C."/>
            <person name="Lewis L.R."/>
            <person name="Lozado R.J."/>
            <person name="Metzker M.L."/>
            <person name="Milosavljevic A."/>
            <person name="Miner G.R."/>
            <person name="Montgomery K.T."/>
            <person name="Morgan M.B."/>
            <person name="Nazareth L.V."/>
            <person name="Scott G."/>
            <person name="Sodergren E."/>
            <person name="Song X.-Z."/>
            <person name="Steffen D."/>
            <person name="Lovering R.C."/>
            <person name="Wheeler D.A."/>
            <person name="Worley K.C."/>
            <person name="Yuan Y."/>
            <person name="Zhang Z."/>
            <person name="Adams C.Q."/>
            <person name="Ansari-Lari M.A."/>
            <person name="Ayele M."/>
            <person name="Brown M.J."/>
            <person name="Chen G."/>
            <person name="Chen Z."/>
            <person name="Clerc-Blankenburg K.P."/>
            <person name="Davis C."/>
            <person name="Delgado O."/>
            <person name="Dinh H.H."/>
            <person name="Draper H."/>
            <person name="Gonzalez-Garay M.L."/>
            <person name="Havlak P."/>
            <person name="Jackson L.R."/>
            <person name="Jacob L.S."/>
            <person name="Kelly S.H."/>
            <person name="Li L."/>
            <person name="Li Z."/>
            <person name="Liu J."/>
            <person name="Liu W."/>
            <person name="Lu J."/>
            <person name="Maheshwari M."/>
            <person name="Nguyen B.-V."/>
            <person name="Okwuonu G.O."/>
            <person name="Pasternak S."/>
            <person name="Perez L.M."/>
            <person name="Plopper F.J.H."/>
            <person name="Santibanez J."/>
            <person name="Shen H."/>
            <person name="Tabor P.E."/>
            <person name="Verduzco D."/>
            <person name="Waldron L."/>
            <person name="Wang Q."/>
            <person name="Williams G.A."/>
            <person name="Zhang J."/>
            <person name="Zhou J."/>
            <person name="Allen C.C."/>
            <person name="Amin A.G."/>
            <person name="Anyalebechi V."/>
            <person name="Bailey M."/>
            <person name="Barbaria J.A."/>
            <person name="Bimage K.E."/>
            <person name="Bryant N.P."/>
            <person name="Burch P.E."/>
            <person name="Burkett C.E."/>
            <person name="Burrell K.L."/>
            <person name="Calderon E."/>
            <person name="Cardenas V."/>
            <person name="Carter K."/>
            <person name="Casias K."/>
            <person name="Cavazos I."/>
            <person name="Cavazos S.R."/>
            <person name="Ceasar H."/>
            <person name="Chacko J."/>
            <person name="Chan S.N."/>
            <person name="Chavez D."/>
            <person name="Christopoulos C."/>
            <person name="Chu J."/>
            <person name="Cockrell R."/>
            <person name="Cox C.D."/>
            <person name="Dang M."/>
            <person name="Dathorne S.R."/>
            <person name="David R."/>
            <person name="Davis C.M."/>
            <person name="Davy-Carroll L."/>
            <person name="Deshazo D.R."/>
            <person name="Donlin J.E."/>
            <person name="D'Souza L."/>
            <person name="Eaves K.A."/>
            <person name="Egan A."/>
            <person name="Emery-Cohen A.J."/>
            <person name="Escotto M."/>
            <person name="Flagg N."/>
            <person name="Forbes L.D."/>
            <person name="Gabisi A.M."/>
            <person name="Garza M."/>
            <person name="Hamilton C."/>
            <person name="Henderson N."/>
            <person name="Hernandez O."/>
            <person name="Hines S."/>
            <person name="Hogues M.E."/>
            <person name="Huang M."/>
            <person name="Idlebird D.G."/>
            <person name="Johnson R."/>
            <person name="Jolivet A."/>
            <person name="Jones S."/>
            <person name="Kagan R."/>
            <person name="King L.M."/>
            <person name="Leal B."/>
            <person name="Lebow H."/>
            <person name="Lee S."/>
            <person name="LeVan J.M."/>
            <person name="Lewis L.C."/>
            <person name="London P."/>
            <person name="Lorensuhewa L.M."/>
            <person name="Loulseged H."/>
            <person name="Lovett D.A."/>
            <person name="Lucier A."/>
            <person name="Lucier R.L."/>
            <person name="Ma J."/>
            <person name="Madu R.C."/>
            <person name="Mapua P."/>
            <person name="Martindale A.D."/>
            <person name="Martinez E."/>
            <person name="Massey E."/>
            <person name="Mawhiney S."/>
            <person name="Meador M.G."/>
            <person name="Mendez S."/>
            <person name="Mercado C."/>
            <person name="Mercado I.C."/>
            <person name="Merritt C.E."/>
            <person name="Miner Z.L."/>
            <person name="Minja E."/>
            <person name="Mitchell T."/>
            <person name="Mohabbat F."/>
            <person name="Mohabbat K."/>
            <person name="Montgomery B."/>
            <person name="Moore N."/>
            <person name="Morris S."/>
            <person name="Munidasa M."/>
            <person name="Ngo R.N."/>
            <person name="Nguyen N.B."/>
            <person name="Nickerson E."/>
            <person name="Nwaokelemeh O.O."/>
            <person name="Nwokenkwo S."/>
            <person name="Obregon M."/>
            <person name="Oguh M."/>
            <person name="Oragunye N."/>
            <person name="Oviedo R.J."/>
            <person name="Parish B.J."/>
            <person name="Parker D.N."/>
            <person name="Parrish J."/>
            <person name="Parks K.L."/>
            <person name="Paul H.A."/>
            <person name="Payton B.A."/>
            <person name="Perez A."/>
            <person name="Perrin W."/>
            <person name="Pickens A."/>
            <person name="Primus E.L."/>
            <person name="Pu L.-L."/>
            <person name="Puazo M."/>
            <person name="Quiles M.M."/>
            <person name="Quiroz J.B."/>
            <person name="Rabata D."/>
            <person name="Reeves K."/>
            <person name="Ruiz S.J."/>
            <person name="Shao H."/>
            <person name="Sisson I."/>
            <person name="Sonaike T."/>
            <person name="Sorelle R.P."/>
            <person name="Sutton A.E."/>
            <person name="Svatek A.F."/>
            <person name="Svetz L.A."/>
            <person name="Tamerisa K.S."/>
            <person name="Taylor T.R."/>
            <person name="Teague B."/>
            <person name="Thomas N."/>
            <person name="Thorn R.D."/>
            <person name="Trejos Z.Y."/>
            <person name="Trevino B.K."/>
            <person name="Ukegbu O.N."/>
            <person name="Urban J.B."/>
            <person name="Vasquez L.I."/>
            <person name="Vera V.A."/>
            <person name="Villasana D.M."/>
            <person name="Wang L."/>
            <person name="Ward-Moore S."/>
            <person name="Warren J.T."/>
            <person name="Wei X."/>
            <person name="White F."/>
            <person name="Williamson A.L."/>
            <person name="Wleczyk R."/>
            <person name="Wooden H.S."/>
            <person name="Wooden S.H."/>
            <person name="Yen J."/>
            <person name="Yoon L."/>
            <person name="Yoon V."/>
            <person name="Zorrilla S.E."/>
            <person name="Nelson D."/>
            <person name="Kucherlapati R."/>
            <person name="Weinstock G."/>
            <person name="Gibbs R.A."/>
        </authorList>
    </citation>
    <scope>NUCLEOTIDE SEQUENCE [LARGE SCALE GENOMIC DNA]</scope>
</reference>
<reference key="4">
    <citation type="submission" date="2005-07" db="EMBL/GenBank/DDBJ databases">
        <authorList>
            <person name="Mural R.J."/>
            <person name="Istrail S."/>
            <person name="Sutton G.G."/>
            <person name="Florea L."/>
            <person name="Halpern A.L."/>
            <person name="Mobarry C.M."/>
            <person name="Lippert R."/>
            <person name="Walenz B."/>
            <person name="Shatkay H."/>
            <person name="Dew I."/>
            <person name="Miller J.R."/>
            <person name="Flanigan M.J."/>
            <person name="Edwards N.J."/>
            <person name="Bolanos R."/>
            <person name="Fasulo D."/>
            <person name="Halldorsson B.V."/>
            <person name="Hannenhalli S."/>
            <person name="Turner R."/>
            <person name="Yooseph S."/>
            <person name="Lu F."/>
            <person name="Nusskern D.R."/>
            <person name="Shue B.C."/>
            <person name="Zheng X.H."/>
            <person name="Zhong F."/>
            <person name="Delcher A.L."/>
            <person name="Huson D.H."/>
            <person name="Kravitz S.A."/>
            <person name="Mouchard L."/>
            <person name="Reinert K."/>
            <person name="Remington K.A."/>
            <person name="Clark A.G."/>
            <person name="Waterman M.S."/>
            <person name="Eichler E.E."/>
            <person name="Adams M.D."/>
            <person name="Hunkapiller M.W."/>
            <person name="Myers E.W."/>
            <person name="Venter J.C."/>
        </authorList>
    </citation>
    <scope>NUCLEOTIDE SEQUENCE [LARGE SCALE GENOMIC DNA]</scope>
</reference>
<reference key="5">
    <citation type="journal article" date="2001" name="J. Cell Sci.">
        <title>Genes for intermediate filament proteins and the draft sequence of the human genome: novel keratin genes and a surprisingly high number of pseudogenes related to keratin genes 8 and 18.</title>
        <authorList>
            <person name="Hesse M."/>
            <person name="Magin T.M."/>
            <person name="Weber K."/>
        </authorList>
    </citation>
    <scope>IDENTIFICATION</scope>
</reference>
<reference key="6">
    <citation type="journal article" date="2005" name="J. Invest. Dermatol.">
        <title>Characterization of new members of the human type II keratin gene family and a general evaluation of the keratin gene domain on chromosome 12q13.13.</title>
        <authorList>
            <person name="Rogers M.A."/>
            <person name="Edler L."/>
            <person name="Winter H."/>
            <person name="Langbein L."/>
            <person name="Beckmann I."/>
            <person name="Schweizer J."/>
        </authorList>
    </citation>
    <scope>TISSUE SPECIFICITY</scope>
</reference>
<reference key="7">
    <citation type="journal article" date="2016" name="Cell Tissue Res.">
        <title>Localisation of keratin K78 in the basal layer and first suprabasal layers of stratified epithelia completes expression catalogue of type II keratins and provides new insights into sequential keratin expression.</title>
        <authorList>
            <person name="Langbein L."/>
            <person name="Eckhart L."/>
            <person name="Fischer H."/>
            <person name="Rogers M.A."/>
            <person name="Praetzel-Wunder S."/>
            <person name="Parry D.A."/>
            <person name="Kittstein W."/>
            <person name="Schweizer J."/>
        </authorList>
    </citation>
    <scope>TISSUE SPECIFICITY</scope>
</reference>
<accession>Q8N1N4</accession>
<accession>A8K4D6</accession>
<accession>Q5HYM7</accession>
<accession>Q7RTT2</accession>
<protein>
    <recommendedName>
        <fullName>Keratin, type II cytoskeletal 78</fullName>
    </recommendedName>
    <alternativeName>
        <fullName>Cytokeratin-78</fullName>
        <shortName>CK-78</shortName>
    </alternativeName>
    <alternativeName>
        <fullName>Keratin-5b</fullName>
    </alternativeName>
    <alternativeName>
        <fullName>Keratin-78</fullName>
        <shortName>K78</shortName>
    </alternativeName>
    <alternativeName>
        <fullName>Type-II keratin Kb40</fullName>
    </alternativeName>
</protein>